<feature type="chain" id="PRO_0000108777" description="Phospho-N-acetylmuramoyl-pentapeptide-transferase">
    <location>
        <begin position="1"/>
        <end position="324"/>
    </location>
</feature>
<feature type="transmembrane region" description="Helical" evidence="1">
    <location>
        <begin position="5"/>
        <end position="25"/>
    </location>
</feature>
<feature type="transmembrane region" description="Helical" evidence="1">
    <location>
        <begin position="52"/>
        <end position="72"/>
    </location>
</feature>
<feature type="transmembrane region" description="Helical" evidence="1">
    <location>
        <begin position="77"/>
        <end position="97"/>
    </location>
</feature>
<feature type="transmembrane region" description="Helical" evidence="1">
    <location>
        <begin position="122"/>
        <end position="142"/>
    </location>
</feature>
<feature type="transmembrane region" description="Helical" evidence="1">
    <location>
        <begin position="149"/>
        <end position="169"/>
    </location>
</feature>
<feature type="transmembrane region" description="Helical" evidence="1">
    <location>
        <begin position="176"/>
        <end position="196"/>
    </location>
</feature>
<feature type="transmembrane region" description="Helical" evidence="1">
    <location>
        <begin position="201"/>
        <end position="221"/>
    </location>
</feature>
<feature type="transmembrane region" description="Helical" evidence="1">
    <location>
        <begin position="227"/>
        <end position="247"/>
    </location>
</feature>
<feature type="transmembrane region" description="Helical" evidence="1">
    <location>
        <begin position="253"/>
        <end position="273"/>
    </location>
</feature>
<feature type="transmembrane region" description="Helical" evidence="1">
    <location>
        <begin position="302"/>
        <end position="322"/>
    </location>
</feature>
<keyword id="KW-0131">Cell cycle</keyword>
<keyword id="KW-0132">Cell division</keyword>
<keyword id="KW-1003">Cell membrane</keyword>
<keyword id="KW-0133">Cell shape</keyword>
<keyword id="KW-0961">Cell wall biogenesis/degradation</keyword>
<keyword id="KW-0460">Magnesium</keyword>
<keyword id="KW-0472">Membrane</keyword>
<keyword id="KW-0479">Metal-binding</keyword>
<keyword id="KW-0573">Peptidoglycan synthesis</keyword>
<keyword id="KW-0808">Transferase</keyword>
<keyword id="KW-0812">Transmembrane</keyword>
<keyword id="KW-1133">Transmembrane helix</keyword>
<gene>
    <name evidence="1" type="primary">mraY</name>
    <name type="ordered locus">BCE33L3672</name>
</gene>
<reference key="1">
    <citation type="journal article" date="2006" name="J. Bacteriol.">
        <title>Pathogenomic sequence analysis of Bacillus cereus and Bacillus thuringiensis isolates closely related to Bacillus anthracis.</title>
        <authorList>
            <person name="Han C.S."/>
            <person name="Xie G."/>
            <person name="Challacombe J.F."/>
            <person name="Altherr M.R."/>
            <person name="Bhotika S.S."/>
            <person name="Bruce D."/>
            <person name="Campbell C.S."/>
            <person name="Campbell M.L."/>
            <person name="Chen J."/>
            <person name="Chertkov O."/>
            <person name="Cleland C."/>
            <person name="Dimitrijevic M."/>
            <person name="Doggett N.A."/>
            <person name="Fawcett J.J."/>
            <person name="Glavina T."/>
            <person name="Goodwin L.A."/>
            <person name="Hill K.K."/>
            <person name="Hitchcock P."/>
            <person name="Jackson P.J."/>
            <person name="Keim P."/>
            <person name="Kewalramani A.R."/>
            <person name="Longmire J."/>
            <person name="Lucas S."/>
            <person name="Malfatti S."/>
            <person name="McMurry K."/>
            <person name="Meincke L.J."/>
            <person name="Misra M."/>
            <person name="Moseman B.L."/>
            <person name="Mundt M."/>
            <person name="Munk A.C."/>
            <person name="Okinaka R.T."/>
            <person name="Parson-Quintana B."/>
            <person name="Reilly L.P."/>
            <person name="Richardson P."/>
            <person name="Robinson D.L."/>
            <person name="Rubin E."/>
            <person name="Saunders E."/>
            <person name="Tapia R."/>
            <person name="Tesmer J.G."/>
            <person name="Thayer N."/>
            <person name="Thompson L.S."/>
            <person name="Tice H."/>
            <person name="Ticknor L.O."/>
            <person name="Wills P.L."/>
            <person name="Brettin T.S."/>
            <person name="Gilna P."/>
        </authorList>
    </citation>
    <scope>NUCLEOTIDE SEQUENCE [LARGE SCALE GENOMIC DNA]</scope>
    <source>
        <strain>ZK / E33L</strain>
    </source>
</reference>
<protein>
    <recommendedName>
        <fullName evidence="1">Phospho-N-acetylmuramoyl-pentapeptide-transferase</fullName>
        <ecNumber evidence="1">2.7.8.13</ecNumber>
    </recommendedName>
    <alternativeName>
        <fullName evidence="1">UDP-MurNAc-pentapeptide phosphotransferase</fullName>
    </alternativeName>
</protein>
<accession>Q636B3</accession>
<proteinExistence type="inferred from homology"/>
<sequence>MLEQGLLVTAGVAFLISVALSPLFIPFLRKLKFGQSIRDEGPKSHQKKSGTPTMGGIVIYVSMMVTSLIMAIKFNHLGAEVSLLLLVTFGYGLIGFLDDYIKVVKKRNLGLTSKQKLVGQLVIAIAFFLIGKGQAFHTYIMIPGTDVKFELGWAYFVLVLFMLIGGSNAVNLTDGLDGLLSGTAAIAFGAFSIIAVAQEQFGVAIFCMAVVGAVLGFLVFNANPAKVFMGDTGSLALGGAIAAVAILLKQELLLVIIGGVFVMETLSVIIQVISFKTTGKRVFKMSPLHHHYELCGWSEWRVVVTFWSVGFLLAVLGIYIGVWM</sequence>
<dbReference type="EC" id="2.7.8.13" evidence="1"/>
<dbReference type="EMBL" id="CP000001">
    <property type="protein sequence ID" value="AAU16594.1"/>
    <property type="molecule type" value="Genomic_DNA"/>
</dbReference>
<dbReference type="RefSeq" id="WP_000893058.1">
    <property type="nucleotide sequence ID" value="NZ_CP009968.1"/>
</dbReference>
<dbReference type="SMR" id="Q636B3"/>
<dbReference type="GeneID" id="92799814"/>
<dbReference type="KEGG" id="bcz:BCE33L3672"/>
<dbReference type="PATRIC" id="fig|288681.22.peg.1739"/>
<dbReference type="UniPathway" id="UPA00219"/>
<dbReference type="Proteomes" id="UP000002612">
    <property type="component" value="Chromosome"/>
</dbReference>
<dbReference type="GO" id="GO:0005886">
    <property type="term" value="C:plasma membrane"/>
    <property type="evidence" value="ECO:0007669"/>
    <property type="project" value="UniProtKB-SubCell"/>
</dbReference>
<dbReference type="GO" id="GO:0046872">
    <property type="term" value="F:metal ion binding"/>
    <property type="evidence" value="ECO:0007669"/>
    <property type="project" value="UniProtKB-KW"/>
</dbReference>
<dbReference type="GO" id="GO:0008963">
    <property type="term" value="F:phospho-N-acetylmuramoyl-pentapeptide-transferase activity"/>
    <property type="evidence" value="ECO:0007669"/>
    <property type="project" value="UniProtKB-UniRule"/>
</dbReference>
<dbReference type="GO" id="GO:0051992">
    <property type="term" value="F:UDP-N-acetylmuramoyl-L-alanyl-D-glutamyl-meso-2,6-diaminopimelyl-D-alanyl-D-alanine:undecaprenyl-phosphate transferase activity"/>
    <property type="evidence" value="ECO:0007669"/>
    <property type="project" value="RHEA"/>
</dbReference>
<dbReference type="GO" id="GO:0051301">
    <property type="term" value="P:cell division"/>
    <property type="evidence" value="ECO:0007669"/>
    <property type="project" value="UniProtKB-KW"/>
</dbReference>
<dbReference type="GO" id="GO:0071555">
    <property type="term" value="P:cell wall organization"/>
    <property type="evidence" value="ECO:0007669"/>
    <property type="project" value="UniProtKB-KW"/>
</dbReference>
<dbReference type="GO" id="GO:0009252">
    <property type="term" value="P:peptidoglycan biosynthetic process"/>
    <property type="evidence" value="ECO:0007669"/>
    <property type="project" value="UniProtKB-UniRule"/>
</dbReference>
<dbReference type="GO" id="GO:0008360">
    <property type="term" value="P:regulation of cell shape"/>
    <property type="evidence" value="ECO:0007669"/>
    <property type="project" value="UniProtKB-KW"/>
</dbReference>
<dbReference type="CDD" id="cd06852">
    <property type="entry name" value="GT_MraY"/>
    <property type="match status" value="1"/>
</dbReference>
<dbReference type="HAMAP" id="MF_00038">
    <property type="entry name" value="MraY"/>
    <property type="match status" value="1"/>
</dbReference>
<dbReference type="InterPro" id="IPR000715">
    <property type="entry name" value="Glycosyl_transferase_4"/>
</dbReference>
<dbReference type="InterPro" id="IPR003524">
    <property type="entry name" value="PNAcMuramoyl-5peptid_Trfase"/>
</dbReference>
<dbReference type="InterPro" id="IPR018480">
    <property type="entry name" value="PNAcMuramoyl-5peptid_Trfase_CS"/>
</dbReference>
<dbReference type="NCBIfam" id="TIGR00445">
    <property type="entry name" value="mraY"/>
    <property type="match status" value="1"/>
</dbReference>
<dbReference type="PANTHER" id="PTHR22926">
    <property type="entry name" value="PHOSPHO-N-ACETYLMURAMOYL-PENTAPEPTIDE-TRANSFERASE"/>
    <property type="match status" value="1"/>
</dbReference>
<dbReference type="PANTHER" id="PTHR22926:SF5">
    <property type="entry name" value="PHOSPHO-N-ACETYLMURAMOYL-PENTAPEPTIDE-TRANSFERASE HOMOLOG"/>
    <property type="match status" value="1"/>
</dbReference>
<dbReference type="Pfam" id="PF00953">
    <property type="entry name" value="Glycos_transf_4"/>
    <property type="match status" value="1"/>
</dbReference>
<dbReference type="Pfam" id="PF10555">
    <property type="entry name" value="MraY_sig1"/>
    <property type="match status" value="1"/>
</dbReference>
<dbReference type="PROSITE" id="PS01348">
    <property type="entry name" value="MRAY_2"/>
    <property type="match status" value="1"/>
</dbReference>
<comment type="function">
    <text evidence="1">Catalyzes the initial step of the lipid cycle reactions in the biosynthesis of the cell wall peptidoglycan: transfers peptidoglycan precursor phospho-MurNAc-pentapeptide from UDP-MurNAc-pentapeptide onto the lipid carrier undecaprenyl phosphate, yielding undecaprenyl-pyrophosphoryl-MurNAc-pentapeptide, known as lipid I.</text>
</comment>
<comment type="catalytic activity">
    <reaction evidence="1">
        <text>UDP-N-acetyl-alpha-D-muramoyl-L-alanyl-gamma-D-glutamyl-meso-2,6-diaminopimeloyl-D-alanyl-D-alanine + di-trans,octa-cis-undecaprenyl phosphate = di-trans,octa-cis-undecaprenyl diphospho-N-acetyl-alpha-D-muramoyl-L-alanyl-D-glutamyl-meso-2,6-diaminopimeloyl-D-alanyl-D-alanine + UMP</text>
        <dbReference type="Rhea" id="RHEA:28386"/>
        <dbReference type="ChEBI" id="CHEBI:57865"/>
        <dbReference type="ChEBI" id="CHEBI:60392"/>
        <dbReference type="ChEBI" id="CHEBI:61386"/>
        <dbReference type="ChEBI" id="CHEBI:61387"/>
        <dbReference type="EC" id="2.7.8.13"/>
    </reaction>
</comment>
<comment type="cofactor">
    <cofactor evidence="1">
        <name>Mg(2+)</name>
        <dbReference type="ChEBI" id="CHEBI:18420"/>
    </cofactor>
</comment>
<comment type="pathway">
    <text evidence="1">Cell wall biogenesis; peptidoglycan biosynthesis.</text>
</comment>
<comment type="subcellular location">
    <subcellularLocation>
        <location evidence="1">Cell membrane</location>
        <topology evidence="1">Multi-pass membrane protein</topology>
    </subcellularLocation>
</comment>
<comment type="similarity">
    <text evidence="1">Belongs to the glycosyltransferase 4 family. MraY subfamily.</text>
</comment>
<name>MRAY_BACCZ</name>
<evidence type="ECO:0000255" key="1">
    <source>
        <dbReference type="HAMAP-Rule" id="MF_00038"/>
    </source>
</evidence>
<organism>
    <name type="scientific">Bacillus cereus (strain ZK / E33L)</name>
    <dbReference type="NCBI Taxonomy" id="288681"/>
    <lineage>
        <taxon>Bacteria</taxon>
        <taxon>Bacillati</taxon>
        <taxon>Bacillota</taxon>
        <taxon>Bacilli</taxon>
        <taxon>Bacillales</taxon>
        <taxon>Bacillaceae</taxon>
        <taxon>Bacillus</taxon>
        <taxon>Bacillus cereus group</taxon>
    </lineage>
</organism>